<protein>
    <recommendedName>
        <fullName evidence="5">Secretory-abundant heat soluble protein 2</fullName>
        <shortName evidence="5">SAHS2</shortName>
    </recommendedName>
    <alternativeName>
        <fullName evidence="6">Tardigrade-specific intrinsically disordered protein SAHS2</fullName>
        <shortName evidence="6">TDP SAHS2</shortName>
    </alternativeName>
</protein>
<dbReference type="EMBL" id="AB650498">
    <property type="protein sequence ID" value="BAM37957.1"/>
    <property type="molecule type" value="mRNA"/>
</dbReference>
<dbReference type="EMBL" id="BDGG01000001">
    <property type="protein sequence ID" value="GAU89940.1"/>
    <property type="molecule type" value="Genomic_DNA"/>
</dbReference>
<dbReference type="SMR" id="J7MAN2"/>
<dbReference type="GlyCosmos" id="J7MAN2">
    <property type="glycosylation" value="1 site, No reported glycans"/>
</dbReference>
<dbReference type="OrthoDB" id="4451214at33208"/>
<dbReference type="Proteomes" id="UP000186922">
    <property type="component" value="Unassembled WGS sequence"/>
</dbReference>
<dbReference type="GO" id="GO:0005576">
    <property type="term" value="C:extracellular region"/>
    <property type="evidence" value="ECO:0007669"/>
    <property type="project" value="UniProtKB-SubCell"/>
</dbReference>
<dbReference type="CDD" id="cd00742">
    <property type="entry name" value="FABP"/>
    <property type="match status" value="1"/>
</dbReference>
<dbReference type="Gene3D" id="2.40.128.20">
    <property type="match status" value="1"/>
</dbReference>
<dbReference type="InterPro" id="IPR012674">
    <property type="entry name" value="Calycin"/>
</dbReference>
<dbReference type="SUPFAM" id="SSF50814">
    <property type="entry name" value="Lipocalins"/>
    <property type="match status" value="1"/>
</dbReference>
<proteinExistence type="evidence at protein level"/>
<feature type="signal peptide" evidence="3">
    <location>
        <begin position="1"/>
        <end position="19"/>
    </location>
</feature>
<feature type="chain" id="PRO_5003794980" description="Secretory-abundant heat soluble protein 2" evidence="3">
    <location>
        <begin position="20"/>
        <end position="174"/>
    </location>
</feature>
<feature type="region of interest" description="SAHS-c1" evidence="7">
    <location>
        <begin position="30"/>
        <end position="60"/>
    </location>
</feature>
<feature type="region of interest" description="SAHS-c2" evidence="7">
    <location>
        <begin position="77"/>
        <end position="105"/>
    </location>
</feature>
<feature type="region of interest" description="SAHS-c3" evidence="7">
    <location>
        <begin position="118"/>
        <end position="172"/>
    </location>
</feature>
<feature type="glycosylation site" description="N-linked (GlcNAc...) asparagine" evidence="4">
    <location>
        <position position="111"/>
    </location>
</feature>
<keyword id="KW-0325">Glycoprotein</keyword>
<keyword id="KW-1185">Reference proteome</keyword>
<keyword id="KW-0964">Secreted</keyword>
<keyword id="KW-0732">Signal</keyword>
<keyword id="KW-0346">Stress response</keyword>
<comment type="function">
    <text evidence="1">Secreted heat soluble protein acting as a molecular shield in water-deficient condition (PubMed:22937162). Tardigrade-specific intrinsically disordered proteins (TDPs) are essential for desiccation tolerance by forming non-crystalline amorphous solids upon desiccation, and this vitrified state mirrors their protective capabilities (By similarity).</text>
</comment>
<comment type="subcellular location">
    <subcellularLocation>
        <location evidence="1">Secreted</location>
    </subcellularLocation>
</comment>
<comment type="domain">
    <text evidence="7">SAHS-c1, SAHS-c2 and SAHS-c3 are 3 highly conserved regions within the SAHS protein family (PubMed:22937162).</text>
</comment>
<comment type="miscellaneous">
    <text evidence="2">Trehalose, a disaccharide essential for several organisms to survive drying, is detected at low levels or not at all in some tardigrade species, indicating that tardigrades possess potentially novel mechanisms for surviving desiccation involving tardigrade-specific intrinsically disordered proteins (TDPs) (By similarity).</text>
</comment>
<comment type="similarity">
    <text evidence="6">Belongs to the Secretory-abundant heat soluble protein (SAHS) family.</text>
</comment>
<name>SAHS2_RAMVA</name>
<sequence length="174" mass="19878">MHRFVLALVVFAGAAIVWAADDAAHEEGVEWTGKPWMGKWESDPSKDENVEEFKKKLQLPMSHSEMNKNSKVWIHHYKKGDEYHHKIIINDAHYKNDIVFKLGQESAGSYNGSSFSVKYEDKDGALVGSVHYTGTKEQSLDKTINNVFKLEGDHLVKTSTIEGVTMKRHYNKRQ</sequence>
<reference key="1">
    <citation type="journal article" date="2012" name="PLoS ONE">
        <title>Two novel heat-soluble protein families abundantly expressed in an anhydrobiotic tardigrade.</title>
        <authorList>
            <person name="Yamaguchi A."/>
            <person name="Tanaka S."/>
            <person name="Yamaguchi S."/>
            <person name="Kuwahara H."/>
            <person name="Takamura C."/>
            <person name="Imajoh-Ohmi S."/>
            <person name="Horikawa D.D."/>
            <person name="Toyoda A."/>
            <person name="Katayama T."/>
            <person name="Arakawa K."/>
            <person name="Fujiyama A."/>
            <person name="Kubo T."/>
            <person name="Kunieda T."/>
        </authorList>
    </citation>
    <scope>NUCLEOTIDE SEQUENCE [MRNA]</scope>
    <scope>IDENTIFICATION BY MASS SPECTROMETRY</scope>
    <scope>FUNCTION</scope>
    <scope>DOMAIN</scope>
    <source>
        <strain>YOKOZUNA-1</strain>
    </source>
</reference>
<reference key="2">
    <citation type="journal article" date="2016" name="Nat. Commun.">
        <title>Extremotolerant tardigrade genome and improved radiotolerance of human cultured cells by tardigrade-unique protein.</title>
        <authorList>
            <person name="Hashimoto T."/>
            <person name="Horikawa D.D."/>
            <person name="Saito Y."/>
            <person name="Kuwahara H."/>
            <person name="Kozuka-Hata H."/>
            <person name="Shin-I T."/>
            <person name="Minakuchi Y."/>
            <person name="Ohishi K."/>
            <person name="Motoyama A."/>
            <person name="Aizu T."/>
            <person name="Enomoto A."/>
            <person name="Kondo K."/>
            <person name="Tanaka S."/>
            <person name="Hara Y."/>
            <person name="Koshikawa S."/>
            <person name="Sagara H."/>
            <person name="Miura T."/>
            <person name="Yokobori S."/>
            <person name="Miyagawa K."/>
            <person name="Suzuki Y."/>
            <person name="Kubo T."/>
            <person name="Oyama M."/>
            <person name="Kohara Y."/>
            <person name="Fujiyama A."/>
            <person name="Arakawa K."/>
            <person name="Katayama T."/>
            <person name="Toyoda A."/>
            <person name="Kunieda T."/>
        </authorList>
    </citation>
    <scope>NUCLEOTIDE SEQUENCE [LARGE SCALE GENOMIC DNA]</scope>
    <source>
        <strain>YOKOZUNA-1</strain>
    </source>
</reference>
<evidence type="ECO:0000250" key="1">
    <source>
        <dbReference type="UniProtKB" id="J7MFT5"/>
    </source>
</evidence>
<evidence type="ECO:0000250" key="2">
    <source>
        <dbReference type="UniProtKB" id="P0CU39"/>
    </source>
</evidence>
<evidence type="ECO:0000255" key="3"/>
<evidence type="ECO:0000255" key="4">
    <source>
        <dbReference type="PROSITE-ProRule" id="PRU00498"/>
    </source>
</evidence>
<evidence type="ECO:0000303" key="5">
    <source>
    </source>
</evidence>
<evidence type="ECO:0000305" key="6"/>
<evidence type="ECO:0000305" key="7">
    <source>
    </source>
</evidence>
<accession>J7MAN2</accession>
<organism>
    <name type="scientific">Ramazzottius varieornatus</name>
    <name type="common">Water bear</name>
    <name type="synonym">Tardigrade</name>
    <dbReference type="NCBI Taxonomy" id="947166"/>
    <lineage>
        <taxon>Eukaryota</taxon>
        <taxon>Metazoa</taxon>
        <taxon>Ecdysozoa</taxon>
        <taxon>Tardigrada</taxon>
        <taxon>Eutardigrada</taxon>
        <taxon>Parachela</taxon>
        <taxon>Hypsibioidea</taxon>
        <taxon>Ramazzottiidae</taxon>
        <taxon>Ramazzottius</taxon>
    </lineage>
</organism>
<gene>
    <name evidence="5" type="primary">SAHS2</name>
    <name type="ORF">RvY_02431</name>
</gene>